<evidence type="ECO:0000255" key="1">
    <source>
        <dbReference type="HAMAP-Rule" id="MF_00787"/>
    </source>
</evidence>
<protein>
    <recommendedName>
        <fullName evidence="1">Cobalt-precorrin-5B C(1)-methyltransferase</fullName>
        <ecNumber evidence="1">2.1.1.195</ecNumber>
    </recommendedName>
    <alternativeName>
        <fullName evidence="1">Cobalt-precorrin-6A synthase</fullName>
    </alternativeName>
</protein>
<organism>
    <name type="scientific">Moorella thermoacetica (strain ATCC 39073 / JCM 9320)</name>
    <dbReference type="NCBI Taxonomy" id="264732"/>
    <lineage>
        <taxon>Bacteria</taxon>
        <taxon>Bacillati</taxon>
        <taxon>Bacillota</taxon>
        <taxon>Clostridia</taxon>
        <taxon>Moorellales</taxon>
        <taxon>Moorellaceae</taxon>
        <taxon>Moorella</taxon>
    </lineage>
</organism>
<comment type="function">
    <text evidence="1">Catalyzes the methylation of C-1 in cobalt-precorrin-5B to form cobalt-precorrin-6A.</text>
</comment>
<comment type="catalytic activity">
    <reaction evidence="1">
        <text>Co-precorrin-5B + S-adenosyl-L-methionine = Co-precorrin-6A + S-adenosyl-L-homocysteine</text>
        <dbReference type="Rhea" id="RHEA:26285"/>
        <dbReference type="ChEBI" id="CHEBI:57856"/>
        <dbReference type="ChEBI" id="CHEBI:59789"/>
        <dbReference type="ChEBI" id="CHEBI:60063"/>
        <dbReference type="ChEBI" id="CHEBI:60064"/>
        <dbReference type="EC" id="2.1.1.195"/>
    </reaction>
</comment>
<comment type="pathway">
    <text evidence="1">Cofactor biosynthesis; adenosylcobalamin biosynthesis; cob(II)yrinate a,c-diamide from sirohydrochlorin (anaerobic route): step 6/10.</text>
</comment>
<comment type="similarity">
    <text evidence="1">Belongs to the CbiD family.</text>
</comment>
<proteinExistence type="inferred from homology"/>
<gene>
    <name evidence="1" type="primary">cbiD</name>
    <name type="ordered locus">Moth_1088</name>
</gene>
<name>CBID_MOOTA</name>
<sequence>MVQKLRRGYTTGTCAAGAAKAAALALWRGEEVQEITLTLPRGEIITLPVTVHKGVEEAEAIIIKDAGDDPDVTHGVAIHVRARKQAGGITLRGGEGIGIVTRPGLAVPVGEPAINPVPRAMIKEAVAAIVPPGLGMELEISIPEGARLARRTLNPRLGIEGGLSILGTTGIVEPMSEEAFRNSLVPQIDVALAAGWETLVLTPGRLGQRQAEEKYGLPATAIILTSNFIGYLLEACVERRVKRVLLWGHGGKLVKVAGGIFYTHSHVADARQEIIAALAAAAGASREIVQQILAATTVEAVQEVIRGSDFEPGFWDSLAARASQRATDLVHGELTVGTALLNLQGDIMGRDEVARQIMGDWGYDR</sequence>
<dbReference type="EC" id="2.1.1.195" evidence="1"/>
<dbReference type="EMBL" id="CP000232">
    <property type="protein sequence ID" value="ABC19402.1"/>
    <property type="molecule type" value="Genomic_DNA"/>
</dbReference>
<dbReference type="RefSeq" id="YP_429945.1">
    <property type="nucleotide sequence ID" value="NC_007644.1"/>
</dbReference>
<dbReference type="SMR" id="Q2RJI7"/>
<dbReference type="STRING" id="264732.Moth_1088"/>
<dbReference type="EnsemblBacteria" id="ABC19402">
    <property type="protein sequence ID" value="ABC19402"/>
    <property type="gene ID" value="Moth_1088"/>
</dbReference>
<dbReference type="KEGG" id="mta:Moth_1088"/>
<dbReference type="PATRIC" id="fig|264732.11.peg.1169"/>
<dbReference type="eggNOG" id="COG1903">
    <property type="taxonomic scope" value="Bacteria"/>
</dbReference>
<dbReference type="HOGENOM" id="CLU_041273_1_0_9"/>
<dbReference type="OrthoDB" id="6439987at2"/>
<dbReference type="UniPathway" id="UPA00148">
    <property type="reaction ID" value="UER00227"/>
</dbReference>
<dbReference type="GO" id="GO:0043780">
    <property type="term" value="F:cobalt-precorrin-5B C1-methyltransferase activity"/>
    <property type="evidence" value="ECO:0007669"/>
    <property type="project" value="RHEA"/>
</dbReference>
<dbReference type="GO" id="GO:0019251">
    <property type="term" value="P:anaerobic cobalamin biosynthetic process"/>
    <property type="evidence" value="ECO:0007669"/>
    <property type="project" value="UniProtKB-UniRule"/>
</dbReference>
<dbReference type="GO" id="GO:0032259">
    <property type="term" value="P:methylation"/>
    <property type="evidence" value="ECO:0007669"/>
    <property type="project" value="UniProtKB-KW"/>
</dbReference>
<dbReference type="Gene3D" id="3.30.2110.10">
    <property type="entry name" value="CbiD-like"/>
    <property type="match status" value="1"/>
</dbReference>
<dbReference type="HAMAP" id="MF_00787">
    <property type="entry name" value="CbiD"/>
    <property type="match status" value="1"/>
</dbReference>
<dbReference type="InterPro" id="IPR002748">
    <property type="entry name" value="CbiD"/>
</dbReference>
<dbReference type="InterPro" id="IPR036074">
    <property type="entry name" value="CbiD_sf"/>
</dbReference>
<dbReference type="NCBIfam" id="TIGR00312">
    <property type="entry name" value="cbiD"/>
    <property type="match status" value="1"/>
</dbReference>
<dbReference type="NCBIfam" id="NF000849">
    <property type="entry name" value="PRK00075.1-1"/>
    <property type="match status" value="1"/>
</dbReference>
<dbReference type="PANTHER" id="PTHR35863">
    <property type="entry name" value="COBALT-PRECORRIN-5B C(1)-METHYLTRANSFERASE"/>
    <property type="match status" value="1"/>
</dbReference>
<dbReference type="PANTHER" id="PTHR35863:SF1">
    <property type="entry name" value="COBALT-PRECORRIN-5B C(1)-METHYLTRANSFERASE"/>
    <property type="match status" value="1"/>
</dbReference>
<dbReference type="Pfam" id="PF01888">
    <property type="entry name" value="CbiD"/>
    <property type="match status" value="1"/>
</dbReference>
<dbReference type="PIRSF" id="PIRSF026782">
    <property type="entry name" value="CbiD"/>
    <property type="match status" value="1"/>
</dbReference>
<dbReference type="SUPFAM" id="SSF111342">
    <property type="entry name" value="CbiD-like"/>
    <property type="match status" value="1"/>
</dbReference>
<accession>Q2RJI7</accession>
<reference key="1">
    <citation type="journal article" date="2008" name="Environ. Microbiol.">
        <title>The complete genome sequence of Moorella thermoacetica (f. Clostridium thermoaceticum).</title>
        <authorList>
            <person name="Pierce E."/>
            <person name="Xie G."/>
            <person name="Barabote R.D."/>
            <person name="Saunders E."/>
            <person name="Han C.S."/>
            <person name="Detter J.C."/>
            <person name="Richardson P."/>
            <person name="Brettin T.S."/>
            <person name="Das A."/>
            <person name="Ljungdahl L.G."/>
            <person name="Ragsdale S.W."/>
        </authorList>
    </citation>
    <scope>NUCLEOTIDE SEQUENCE [LARGE SCALE GENOMIC DNA]</scope>
    <source>
        <strain>ATCC 39073 / JCM 9320</strain>
    </source>
</reference>
<keyword id="KW-0169">Cobalamin biosynthesis</keyword>
<keyword id="KW-0489">Methyltransferase</keyword>
<keyword id="KW-0949">S-adenosyl-L-methionine</keyword>
<keyword id="KW-0808">Transferase</keyword>
<feature type="chain" id="PRO_0000257767" description="Cobalt-precorrin-5B C(1)-methyltransferase">
    <location>
        <begin position="1"/>
        <end position="365"/>
    </location>
</feature>